<comment type="function">
    <text evidence="1">Protein S19 forms a complex with S13 that binds strongly to the 16S ribosomal RNA.</text>
</comment>
<comment type="similarity">
    <text evidence="1">Belongs to the universal ribosomal protein uS19 family.</text>
</comment>
<accession>Q2A5G6</accession>
<protein>
    <recommendedName>
        <fullName evidence="1">Small ribosomal subunit protein uS19</fullName>
    </recommendedName>
    <alternativeName>
        <fullName evidence="2">30S ribosomal protein S19</fullName>
    </alternativeName>
</protein>
<sequence length="92" mass="10499">MPRSLKKGPFVDHHLLKKVFEAQESNSKKPIKTWSRRSMIVPDMIGLTIAVHNGQQHVPVLMTEEMVGHKLGEFVVTRNYRGHAADKKAKKK</sequence>
<proteinExistence type="inferred from homology"/>
<evidence type="ECO:0000255" key="1">
    <source>
        <dbReference type="HAMAP-Rule" id="MF_00531"/>
    </source>
</evidence>
<evidence type="ECO:0000305" key="2"/>
<dbReference type="EMBL" id="AM233362">
    <property type="protein sequence ID" value="CAJ78681.1"/>
    <property type="molecule type" value="Genomic_DNA"/>
</dbReference>
<dbReference type="RefSeq" id="WP_003027195.1">
    <property type="nucleotide sequence ID" value="NZ_CP009694.1"/>
</dbReference>
<dbReference type="SMR" id="Q2A5G6"/>
<dbReference type="GeneID" id="75264257"/>
<dbReference type="KEGG" id="ftl:FTL_0240"/>
<dbReference type="Proteomes" id="UP000001944">
    <property type="component" value="Chromosome"/>
</dbReference>
<dbReference type="GO" id="GO:0005737">
    <property type="term" value="C:cytoplasm"/>
    <property type="evidence" value="ECO:0007669"/>
    <property type="project" value="UniProtKB-ARBA"/>
</dbReference>
<dbReference type="GO" id="GO:0015935">
    <property type="term" value="C:small ribosomal subunit"/>
    <property type="evidence" value="ECO:0007669"/>
    <property type="project" value="InterPro"/>
</dbReference>
<dbReference type="GO" id="GO:0019843">
    <property type="term" value="F:rRNA binding"/>
    <property type="evidence" value="ECO:0007669"/>
    <property type="project" value="UniProtKB-UniRule"/>
</dbReference>
<dbReference type="GO" id="GO:0003735">
    <property type="term" value="F:structural constituent of ribosome"/>
    <property type="evidence" value="ECO:0007669"/>
    <property type="project" value="InterPro"/>
</dbReference>
<dbReference type="GO" id="GO:0000028">
    <property type="term" value="P:ribosomal small subunit assembly"/>
    <property type="evidence" value="ECO:0007669"/>
    <property type="project" value="TreeGrafter"/>
</dbReference>
<dbReference type="GO" id="GO:0006412">
    <property type="term" value="P:translation"/>
    <property type="evidence" value="ECO:0007669"/>
    <property type="project" value="UniProtKB-UniRule"/>
</dbReference>
<dbReference type="FunFam" id="3.30.860.10:FF:000001">
    <property type="entry name" value="30S ribosomal protein S19"/>
    <property type="match status" value="1"/>
</dbReference>
<dbReference type="Gene3D" id="3.30.860.10">
    <property type="entry name" value="30s Ribosomal Protein S19, Chain A"/>
    <property type="match status" value="1"/>
</dbReference>
<dbReference type="HAMAP" id="MF_00531">
    <property type="entry name" value="Ribosomal_uS19"/>
    <property type="match status" value="1"/>
</dbReference>
<dbReference type="InterPro" id="IPR002222">
    <property type="entry name" value="Ribosomal_uS19"/>
</dbReference>
<dbReference type="InterPro" id="IPR005732">
    <property type="entry name" value="Ribosomal_uS19_bac-type"/>
</dbReference>
<dbReference type="InterPro" id="IPR020934">
    <property type="entry name" value="Ribosomal_uS19_CS"/>
</dbReference>
<dbReference type="InterPro" id="IPR023575">
    <property type="entry name" value="Ribosomal_uS19_SF"/>
</dbReference>
<dbReference type="NCBIfam" id="TIGR01050">
    <property type="entry name" value="rpsS_bact"/>
    <property type="match status" value="1"/>
</dbReference>
<dbReference type="PANTHER" id="PTHR11880">
    <property type="entry name" value="RIBOSOMAL PROTEIN S19P FAMILY MEMBER"/>
    <property type="match status" value="1"/>
</dbReference>
<dbReference type="PANTHER" id="PTHR11880:SF8">
    <property type="entry name" value="SMALL RIBOSOMAL SUBUNIT PROTEIN US19M"/>
    <property type="match status" value="1"/>
</dbReference>
<dbReference type="Pfam" id="PF00203">
    <property type="entry name" value="Ribosomal_S19"/>
    <property type="match status" value="1"/>
</dbReference>
<dbReference type="PIRSF" id="PIRSF002144">
    <property type="entry name" value="Ribosomal_S19"/>
    <property type="match status" value="1"/>
</dbReference>
<dbReference type="PRINTS" id="PR00975">
    <property type="entry name" value="RIBOSOMALS19"/>
</dbReference>
<dbReference type="SUPFAM" id="SSF54570">
    <property type="entry name" value="Ribosomal protein S19"/>
    <property type="match status" value="1"/>
</dbReference>
<dbReference type="PROSITE" id="PS00323">
    <property type="entry name" value="RIBOSOMAL_S19"/>
    <property type="match status" value="1"/>
</dbReference>
<name>RS19_FRATH</name>
<organism>
    <name type="scientific">Francisella tularensis subsp. holarctica (strain LVS)</name>
    <dbReference type="NCBI Taxonomy" id="376619"/>
    <lineage>
        <taxon>Bacteria</taxon>
        <taxon>Pseudomonadati</taxon>
        <taxon>Pseudomonadota</taxon>
        <taxon>Gammaproteobacteria</taxon>
        <taxon>Thiotrichales</taxon>
        <taxon>Francisellaceae</taxon>
        <taxon>Francisella</taxon>
    </lineage>
</organism>
<keyword id="KW-1185">Reference proteome</keyword>
<keyword id="KW-0687">Ribonucleoprotein</keyword>
<keyword id="KW-0689">Ribosomal protein</keyword>
<keyword id="KW-0694">RNA-binding</keyword>
<keyword id="KW-0699">rRNA-binding</keyword>
<feature type="chain" id="PRO_0000265361" description="Small ribosomal subunit protein uS19">
    <location>
        <begin position="1"/>
        <end position="92"/>
    </location>
</feature>
<gene>
    <name evidence="1" type="primary">rpsS</name>
    <name type="ordered locus">FTL_0240</name>
</gene>
<reference key="1">
    <citation type="submission" date="2006-03" db="EMBL/GenBank/DDBJ databases">
        <title>Complete genome sequence of Francisella tularensis LVS (Live Vaccine Strain).</title>
        <authorList>
            <person name="Chain P."/>
            <person name="Larimer F."/>
            <person name="Land M."/>
            <person name="Stilwagen S."/>
            <person name="Larsson P."/>
            <person name="Bearden S."/>
            <person name="Chu M."/>
            <person name="Oyston P."/>
            <person name="Forsman M."/>
            <person name="Andersson S."/>
            <person name="Lindler L."/>
            <person name="Titball R."/>
            <person name="Garcia E."/>
        </authorList>
    </citation>
    <scope>NUCLEOTIDE SEQUENCE [LARGE SCALE GENOMIC DNA]</scope>
    <source>
        <strain>LVS</strain>
    </source>
</reference>